<dbReference type="EC" id="6.3.5.7" evidence="1"/>
<dbReference type="EMBL" id="CP000393">
    <property type="protein sequence ID" value="ABG51306.1"/>
    <property type="molecule type" value="Genomic_DNA"/>
</dbReference>
<dbReference type="RefSeq" id="WP_011611677.1">
    <property type="nucleotide sequence ID" value="NC_008312.1"/>
</dbReference>
<dbReference type="SMR" id="Q113L8"/>
<dbReference type="STRING" id="203124.Tery_2065"/>
<dbReference type="KEGG" id="ter:Tery_2065"/>
<dbReference type="eggNOG" id="COG0154">
    <property type="taxonomic scope" value="Bacteria"/>
</dbReference>
<dbReference type="HOGENOM" id="CLU_009600_0_3_3"/>
<dbReference type="OrthoDB" id="9811471at2"/>
<dbReference type="GO" id="GO:0030956">
    <property type="term" value="C:glutamyl-tRNA(Gln) amidotransferase complex"/>
    <property type="evidence" value="ECO:0007669"/>
    <property type="project" value="InterPro"/>
</dbReference>
<dbReference type="GO" id="GO:0005524">
    <property type="term" value="F:ATP binding"/>
    <property type="evidence" value="ECO:0007669"/>
    <property type="project" value="UniProtKB-KW"/>
</dbReference>
<dbReference type="GO" id="GO:0050567">
    <property type="term" value="F:glutaminyl-tRNA synthase (glutamine-hydrolyzing) activity"/>
    <property type="evidence" value="ECO:0007669"/>
    <property type="project" value="UniProtKB-UniRule"/>
</dbReference>
<dbReference type="GO" id="GO:0006412">
    <property type="term" value="P:translation"/>
    <property type="evidence" value="ECO:0007669"/>
    <property type="project" value="UniProtKB-UniRule"/>
</dbReference>
<dbReference type="Gene3D" id="3.90.1300.10">
    <property type="entry name" value="Amidase signature (AS) domain"/>
    <property type="match status" value="1"/>
</dbReference>
<dbReference type="HAMAP" id="MF_00120">
    <property type="entry name" value="GatA"/>
    <property type="match status" value="1"/>
</dbReference>
<dbReference type="InterPro" id="IPR000120">
    <property type="entry name" value="Amidase"/>
</dbReference>
<dbReference type="InterPro" id="IPR020556">
    <property type="entry name" value="Amidase_CS"/>
</dbReference>
<dbReference type="InterPro" id="IPR023631">
    <property type="entry name" value="Amidase_dom"/>
</dbReference>
<dbReference type="InterPro" id="IPR036928">
    <property type="entry name" value="AS_sf"/>
</dbReference>
<dbReference type="InterPro" id="IPR004412">
    <property type="entry name" value="GatA"/>
</dbReference>
<dbReference type="NCBIfam" id="TIGR00132">
    <property type="entry name" value="gatA"/>
    <property type="match status" value="1"/>
</dbReference>
<dbReference type="PANTHER" id="PTHR11895:SF151">
    <property type="entry name" value="GLUTAMYL-TRNA(GLN) AMIDOTRANSFERASE SUBUNIT A"/>
    <property type="match status" value="1"/>
</dbReference>
<dbReference type="PANTHER" id="PTHR11895">
    <property type="entry name" value="TRANSAMIDASE"/>
    <property type="match status" value="1"/>
</dbReference>
<dbReference type="Pfam" id="PF01425">
    <property type="entry name" value="Amidase"/>
    <property type="match status" value="1"/>
</dbReference>
<dbReference type="SUPFAM" id="SSF75304">
    <property type="entry name" value="Amidase signature (AS) enzymes"/>
    <property type="match status" value="1"/>
</dbReference>
<dbReference type="PROSITE" id="PS00571">
    <property type="entry name" value="AMIDASES"/>
    <property type="match status" value="1"/>
</dbReference>
<gene>
    <name evidence="1" type="primary">gatA</name>
    <name type="ordered locus">Tery_2065</name>
</gene>
<reference key="1">
    <citation type="journal article" date="2015" name="Proc. Natl. Acad. Sci. U.S.A.">
        <title>Trichodesmium genome maintains abundant, widespread noncoding DNA in situ, despite oligotrophic lifestyle.</title>
        <authorList>
            <person name="Walworth N."/>
            <person name="Pfreundt U."/>
            <person name="Nelson W.C."/>
            <person name="Mincer T."/>
            <person name="Heidelberg J.F."/>
            <person name="Fu F."/>
            <person name="Waterbury J.B."/>
            <person name="Glavina del Rio T."/>
            <person name="Goodwin L."/>
            <person name="Kyrpides N.C."/>
            <person name="Land M.L."/>
            <person name="Woyke T."/>
            <person name="Hutchins D.A."/>
            <person name="Hess W.R."/>
            <person name="Webb E.A."/>
        </authorList>
    </citation>
    <scope>NUCLEOTIDE SEQUENCE [LARGE SCALE GENOMIC DNA]</scope>
    <source>
        <strain>IMS101</strain>
    </source>
</reference>
<comment type="function">
    <text evidence="1">Allows the formation of correctly charged Gln-tRNA(Gln) through the transamidation of misacylated Glu-tRNA(Gln) in organisms which lack glutaminyl-tRNA synthetase. The reaction takes place in the presence of glutamine and ATP through an activated gamma-phospho-Glu-tRNA(Gln).</text>
</comment>
<comment type="catalytic activity">
    <reaction evidence="1">
        <text>L-glutamyl-tRNA(Gln) + L-glutamine + ATP + H2O = L-glutaminyl-tRNA(Gln) + L-glutamate + ADP + phosphate + H(+)</text>
        <dbReference type="Rhea" id="RHEA:17521"/>
        <dbReference type="Rhea" id="RHEA-COMP:9681"/>
        <dbReference type="Rhea" id="RHEA-COMP:9684"/>
        <dbReference type="ChEBI" id="CHEBI:15377"/>
        <dbReference type="ChEBI" id="CHEBI:15378"/>
        <dbReference type="ChEBI" id="CHEBI:29985"/>
        <dbReference type="ChEBI" id="CHEBI:30616"/>
        <dbReference type="ChEBI" id="CHEBI:43474"/>
        <dbReference type="ChEBI" id="CHEBI:58359"/>
        <dbReference type="ChEBI" id="CHEBI:78520"/>
        <dbReference type="ChEBI" id="CHEBI:78521"/>
        <dbReference type="ChEBI" id="CHEBI:456216"/>
        <dbReference type="EC" id="6.3.5.7"/>
    </reaction>
</comment>
<comment type="subunit">
    <text evidence="1">Heterotrimer of A, B and C subunits.</text>
</comment>
<comment type="similarity">
    <text evidence="1">Belongs to the amidase family. GatA subfamily.</text>
</comment>
<keyword id="KW-0067">ATP-binding</keyword>
<keyword id="KW-0436">Ligase</keyword>
<keyword id="KW-0547">Nucleotide-binding</keyword>
<keyword id="KW-0648">Protein biosynthesis</keyword>
<sequence length="485" mass="52225">MASISDIHQQLISKQRSAVEITQEALENINQLEPKLKSFICVTAEKAIAQARQVDAKIAAGEKIGLLTGIPIAVKDNICTRGIPTTCGSKILQNFIPPYESTVTQKLVDAGAIILGKTNLDEFGMGSSTENSAYQVTTNPWDNTRVPGGSSGGSAAAVASAESVVALGSDTGGSIRQPASFCGVVGIKPTYGLVSRYGLVAYASSMDQIGPLSRTVKDSAILLQAIAGYDPKDSTSLNVPVPDYTKNLTPNLRPKGQIRIGLIQETFGDGLDSSVLQAFTKAVELMQELGAEIQVISCPRFSYGLPTYYVIAPSEASANLARYDGVKYGFRASESENLLNMYAKTRSEGFGSEVKRRIMIGTYALSAGYYDAYYLKAQKVRTLIKEDFDKAFAKVDILACPTSPTTAFKLGEKSDNPLSMYLSDLMTIPVNLAGLPALSLPCGFDQQGLPIGMQLISNVLKEDLLFEAAYVYEQANNWYKFQPQL</sequence>
<proteinExistence type="inferred from homology"/>
<name>GATA_TRIEI</name>
<feature type="chain" id="PRO_1000015925" description="Glutamyl-tRNA(Gln) amidotransferase subunit A">
    <location>
        <begin position="1"/>
        <end position="485"/>
    </location>
</feature>
<feature type="active site" description="Charge relay system" evidence="1">
    <location>
        <position position="75"/>
    </location>
</feature>
<feature type="active site" description="Charge relay system" evidence="1">
    <location>
        <position position="150"/>
    </location>
</feature>
<feature type="active site" description="Acyl-ester intermediate" evidence="1">
    <location>
        <position position="174"/>
    </location>
</feature>
<accession>Q113L8</accession>
<organism>
    <name type="scientific">Trichodesmium erythraeum (strain IMS101)</name>
    <dbReference type="NCBI Taxonomy" id="203124"/>
    <lineage>
        <taxon>Bacteria</taxon>
        <taxon>Bacillati</taxon>
        <taxon>Cyanobacteriota</taxon>
        <taxon>Cyanophyceae</taxon>
        <taxon>Oscillatoriophycideae</taxon>
        <taxon>Oscillatoriales</taxon>
        <taxon>Microcoleaceae</taxon>
        <taxon>Trichodesmium</taxon>
    </lineage>
</organism>
<evidence type="ECO:0000255" key="1">
    <source>
        <dbReference type="HAMAP-Rule" id="MF_00120"/>
    </source>
</evidence>
<protein>
    <recommendedName>
        <fullName evidence="1">Glutamyl-tRNA(Gln) amidotransferase subunit A</fullName>
        <shortName evidence="1">Glu-ADT subunit A</shortName>
        <ecNumber evidence="1">6.3.5.7</ecNumber>
    </recommendedName>
</protein>